<sequence>MADTFEFEIVTPDKLVVKDVAEQMQIPGKNGYLGILPGHAPLITELSIGEISYTLRGETKYLALAWGFAEVLPDKVTILAEAAERPEEIDVARAQEAKKRAEQRLQTSGPELDYQRALNAVKRAEVRLQVASHATSKAAVGH</sequence>
<proteinExistence type="inferred from homology"/>
<feature type="chain" id="PRO_0000265779" description="ATP synthase epsilon chain">
    <location>
        <begin position="1"/>
        <end position="142"/>
    </location>
</feature>
<reference key="1">
    <citation type="journal article" date="2009" name="Appl. Environ. Microbiol.">
        <title>Three genomes from the phylum Acidobacteria provide insight into the lifestyles of these microorganisms in soils.</title>
        <authorList>
            <person name="Ward N.L."/>
            <person name="Challacombe J.F."/>
            <person name="Janssen P.H."/>
            <person name="Henrissat B."/>
            <person name="Coutinho P.M."/>
            <person name="Wu M."/>
            <person name="Xie G."/>
            <person name="Haft D.H."/>
            <person name="Sait M."/>
            <person name="Badger J."/>
            <person name="Barabote R.D."/>
            <person name="Bradley B."/>
            <person name="Brettin T.S."/>
            <person name="Brinkac L.M."/>
            <person name="Bruce D."/>
            <person name="Creasy T."/>
            <person name="Daugherty S.C."/>
            <person name="Davidsen T.M."/>
            <person name="DeBoy R.T."/>
            <person name="Detter J.C."/>
            <person name="Dodson R.J."/>
            <person name="Durkin A.S."/>
            <person name="Ganapathy A."/>
            <person name="Gwinn-Giglio M."/>
            <person name="Han C.S."/>
            <person name="Khouri H."/>
            <person name="Kiss H."/>
            <person name="Kothari S.P."/>
            <person name="Madupu R."/>
            <person name="Nelson K.E."/>
            <person name="Nelson W.C."/>
            <person name="Paulsen I."/>
            <person name="Penn K."/>
            <person name="Ren Q."/>
            <person name="Rosovitz M.J."/>
            <person name="Selengut J.D."/>
            <person name="Shrivastava S."/>
            <person name="Sullivan S.A."/>
            <person name="Tapia R."/>
            <person name="Thompson L.S."/>
            <person name="Watkins K.L."/>
            <person name="Yang Q."/>
            <person name="Yu C."/>
            <person name="Zafar N."/>
            <person name="Zhou L."/>
            <person name="Kuske C.R."/>
        </authorList>
    </citation>
    <scope>NUCLEOTIDE SEQUENCE [LARGE SCALE GENOMIC DNA]</scope>
    <source>
        <strain>Ellin345</strain>
    </source>
</reference>
<name>ATPE_KORVE</name>
<protein>
    <recommendedName>
        <fullName evidence="1">ATP synthase epsilon chain</fullName>
    </recommendedName>
    <alternativeName>
        <fullName evidence="1">ATP synthase F1 sector epsilon subunit</fullName>
    </alternativeName>
    <alternativeName>
        <fullName evidence="1">F-ATPase epsilon subunit</fullName>
    </alternativeName>
</protein>
<dbReference type="EMBL" id="CP000360">
    <property type="protein sequence ID" value="ABF43331.1"/>
    <property type="molecule type" value="Genomic_DNA"/>
</dbReference>
<dbReference type="RefSeq" id="WP_011525128.1">
    <property type="nucleotide sequence ID" value="NC_008009.1"/>
</dbReference>
<dbReference type="SMR" id="Q1IIG9"/>
<dbReference type="STRING" id="204669.Acid345_4331"/>
<dbReference type="EnsemblBacteria" id="ABF43331">
    <property type="protein sequence ID" value="ABF43331"/>
    <property type="gene ID" value="Acid345_4331"/>
</dbReference>
<dbReference type="KEGG" id="aba:Acid345_4331"/>
<dbReference type="eggNOG" id="COG0355">
    <property type="taxonomic scope" value="Bacteria"/>
</dbReference>
<dbReference type="HOGENOM" id="CLU_084338_1_3_0"/>
<dbReference type="OrthoDB" id="9804110at2"/>
<dbReference type="Proteomes" id="UP000002432">
    <property type="component" value="Chromosome"/>
</dbReference>
<dbReference type="GO" id="GO:0005886">
    <property type="term" value="C:plasma membrane"/>
    <property type="evidence" value="ECO:0007669"/>
    <property type="project" value="UniProtKB-SubCell"/>
</dbReference>
<dbReference type="GO" id="GO:0045259">
    <property type="term" value="C:proton-transporting ATP synthase complex"/>
    <property type="evidence" value="ECO:0007669"/>
    <property type="project" value="UniProtKB-KW"/>
</dbReference>
<dbReference type="GO" id="GO:0005524">
    <property type="term" value="F:ATP binding"/>
    <property type="evidence" value="ECO:0007669"/>
    <property type="project" value="UniProtKB-UniRule"/>
</dbReference>
<dbReference type="GO" id="GO:0046933">
    <property type="term" value="F:proton-transporting ATP synthase activity, rotational mechanism"/>
    <property type="evidence" value="ECO:0007669"/>
    <property type="project" value="UniProtKB-UniRule"/>
</dbReference>
<dbReference type="CDD" id="cd12152">
    <property type="entry name" value="F1-ATPase_delta"/>
    <property type="match status" value="1"/>
</dbReference>
<dbReference type="FunFam" id="1.20.5.440:FF:000001">
    <property type="entry name" value="ATP synthase epsilon chain"/>
    <property type="match status" value="1"/>
</dbReference>
<dbReference type="Gene3D" id="1.20.5.440">
    <property type="entry name" value="ATP synthase delta/epsilon subunit, C-terminal domain"/>
    <property type="match status" value="1"/>
</dbReference>
<dbReference type="Gene3D" id="2.60.15.10">
    <property type="entry name" value="F0F1 ATP synthase delta/epsilon subunit, N-terminal"/>
    <property type="match status" value="1"/>
</dbReference>
<dbReference type="HAMAP" id="MF_00530">
    <property type="entry name" value="ATP_synth_epsil_bac"/>
    <property type="match status" value="1"/>
</dbReference>
<dbReference type="InterPro" id="IPR036794">
    <property type="entry name" value="ATP_F1_dsu/esu_C_sf"/>
</dbReference>
<dbReference type="InterPro" id="IPR001469">
    <property type="entry name" value="ATP_synth_F1_dsu/esu"/>
</dbReference>
<dbReference type="InterPro" id="IPR020546">
    <property type="entry name" value="ATP_synth_F1_dsu/esu_N"/>
</dbReference>
<dbReference type="InterPro" id="IPR020547">
    <property type="entry name" value="ATP_synth_F1_esu_C"/>
</dbReference>
<dbReference type="InterPro" id="IPR036771">
    <property type="entry name" value="ATPsynth_dsu/esu_N"/>
</dbReference>
<dbReference type="NCBIfam" id="TIGR01216">
    <property type="entry name" value="ATP_synt_epsi"/>
    <property type="match status" value="1"/>
</dbReference>
<dbReference type="NCBIfam" id="NF009980">
    <property type="entry name" value="PRK13446.1"/>
    <property type="match status" value="1"/>
</dbReference>
<dbReference type="PANTHER" id="PTHR13822">
    <property type="entry name" value="ATP SYNTHASE DELTA/EPSILON CHAIN"/>
    <property type="match status" value="1"/>
</dbReference>
<dbReference type="PANTHER" id="PTHR13822:SF10">
    <property type="entry name" value="ATP SYNTHASE EPSILON CHAIN, CHLOROPLASTIC"/>
    <property type="match status" value="1"/>
</dbReference>
<dbReference type="Pfam" id="PF00401">
    <property type="entry name" value="ATP-synt_DE"/>
    <property type="match status" value="1"/>
</dbReference>
<dbReference type="Pfam" id="PF02823">
    <property type="entry name" value="ATP-synt_DE_N"/>
    <property type="match status" value="1"/>
</dbReference>
<dbReference type="SUPFAM" id="SSF46604">
    <property type="entry name" value="Epsilon subunit of F1F0-ATP synthase C-terminal domain"/>
    <property type="match status" value="1"/>
</dbReference>
<dbReference type="SUPFAM" id="SSF51344">
    <property type="entry name" value="Epsilon subunit of F1F0-ATP synthase N-terminal domain"/>
    <property type="match status" value="1"/>
</dbReference>
<accession>Q1IIG9</accession>
<comment type="function">
    <text evidence="1">Produces ATP from ADP in the presence of a proton gradient across the membrane.</text>
</comment>
<comment type="subunit">
    <text>F-type ATPases have 2 components, CF(1) - the catalytic core - and CF(0) - the membrane proton channel. CF(1) has five subunits: alpha(3), beta(3), gamma(1), delta(1), epsilon(1). CF(0) has three main subunits: a, b and c.</text>
</comment>
<comment type="subcellular location">
    <subcellularLocation>
        <location evidence="1">Cell inner membrane</location>
        <topology evidence="1">Peripheral membrane protein</topology>
    </subcellularLocation>
</comment>
<comment type="similarity">
    <text evidence="1">Belongs to the ATPase epsilon chain family.</text>
</comment>
<gene>
    <name evidence="1" type="primary">atpC</name>
    <name type="ordered locus">Acid345_4331</name>
</gene>
<evidence type="ECO:0000255" key="1">
    <source>
        <dbReference type="HAMAP-Rule" id="MF_00530"/>
    </source>
</evidence>
<keyword id="KW-0066">ATP synthesis</keyword>
<keyword id="KW-0997">Cell inner membrane</keyword>
<keyword id="KW-1003">Cell membrane</keyword>
<keyword id="KW-0139">CF(1)</keyword>
<keyword id="KW-0375">Hydrogen ion transport</keyword>
<keyword id="KW-0406">Ion transport</keyword>
<keyword id="KW-0472">Membrane</keyword>
<keyword id="KW-1185">Reference proteome</keyword>
<keyword id="KW-0813">Transport</keyword>
<organism>
    <name type="scientific">Koribacter versatilis (strain Ellin345)</name>
    <dbReference type="NCBI Taxonomy" id="204669"/>
    <lineage>
        <taxon>Bacteria</taxon>
        <taxon>Pseudomonadati</taxon>
        <taxon>Acidobacteriota</taxon>
        <taxon>Terriglobia</taxon>
        <taxon>Terriglobales</taxon>
        <taxon>Candidatus Korobacteraceae</taxon>
        <taxon>Candidatus Korobacter</taxon>
    </lineage>
</organism>